<organism>
    <name type="scientific">Thermus thermophilus (strain ATCC BAA-163 / DSM 7039 / HB27)</name>
    <dbReference type="NCBI Taxonomy" id="262724"/>
    <lineage>
        <taxon>Bacteria</taxon>
        <taxon>Thermotogati</taxon>
        <taxon>Deinococcota</taxon>
        <taxon>Deinococci</taxon>
        <taxon>Thermales</taxon>
        <taxon>Thermaceae</taxon>
        <taxon>Thermus</taxon>
    </lineage>
</organism>
<feature type="chain" id="PRO_0000128282" description="Pantothenate synthetase">
    <location>
        <begin position="1"/>
        <end position="276"/>
    </location>
</feature>
<feature type="active site" description="Proton donor" evidence="1">
    <location>
        <position position="32"/>
    </location>
</feature>
<feature type="binding site" evidence="1">
    <location>
        <begin position="25"/>
        <end position="32"/>
    </location>
    <ligand>
        <name>ATP</name>
        <dbReference type="ChEBI" id="CHEBI:30616"/>
    </ligand>
</feature>
<feature type="binding site" evidence="1">
    <location>
        <position position="56"/>
    </location>
    <ligand>
        <name>(R)-pantoate</name>
        <dbReference type="ChEBI" id="CHEBI:15980"/>
    </ligand>
</feature>
<feature type="binding site" evidence="1">
    <location>
        <position position="56"/>
    </location>
    <ligand>
        <name>beta-alanine</name>
        <dbReference type="ChEBI" id="CHEBI:57966"/>
    </ligand>
</feature>
<feature type="binding site" evidence="1">
    <location>
        <begin position="143"/>
        <end position="146"/>
    </location>
    <ligand>
        <name>ATP</name>
        <dbReference type="ChEBI" id="CHEBI:30616"/>
    </ligand>
</feature>
<feature type="binding site" evidence="1">
    <location>
        <position position="149"/>
    </location>
    <ligand>
        <name>(R)-pantoate</name>
        <dbReference type="ChEBI" id="CHEBI:15980"/>
    </ligand>
</feature>
<feature type="binding site" evidence="1">
    <location>
        <position position="172"/>
    </location>
    <ligand>
        <name>ATP</name>
        <dbReference type="ChEBI" id="CHEBI:30616"/>
    </ligand>
</feature>
<feature type="binding site" evidence="1">
    <location>
        <begin position="180"/>
        <end position="183"/>
    </location>
    <ligand>
        <name>ATP</name>
        <dbReference type="ChEBI" id="CHEBI:30616"/>
    </ligand>
</feature>
<sequence>MRTVSTVAELRAALPREGVGFVPTMGYLHRGHLALVERARRENPFVVVSVFVNPLQFGPGEDYHRYPRDLERDRALLQEAGVDLLFAPGVEEMYPEGFATRVQVEGPLTALWEGAVRPGHFQGVATVVARLFLLVQPQRAYFGEKDYQQLLVVRRMVRDLGFPVEVVGVPTVREEDGLALSSRNVYLSPETRKKAPVLYRALLAMREVAGQGGSVAEALRAGEEALRAVPEFRKDYLAIVHPETLLPLSDWVAGARGIVAGRFPEARLIDNLEVYP</sequence>
<name>PANC_THET2</name>
<dbReference type="EC" id="6.3.2.1" evidence="1"/>
<dbReference type="EMBL" id="AE017221">
    <property type="protein sequence ID" value="AAS81758.1"/>
    <property type="molecule type" value="Genomic_DNA"/>
</dbReference>
<dbReference type="RefSeq" id="WP_011173797.1">
    <property type="nucleotide sequence ID" value="NC_005835.1"/>
</dbReference>
<dbReference type="SMR" id="Q72HS0"/>
<dbReference type="GeneID" id="3169469"/>
<dbReference type="KEGG" id="tth:TT_C1416"/>
<dbReference type="eggNOG" id="COG0414">
    <property type="taxonomic scope" value="Bacteria"/>
</dbReference>
<dbReference type="HOGENOM" id="CLU_047148_0_0_0"/>
<dbReference type="OrthoDB" id="9773087at2"/>
<dbReference type="UniPathway" id="UPA00028">
    <property type="reaction ID" value="UER00005"/>
</dbReference>
<dbReference type="Proteomes" id="UP000000592">
    <property type="component" value="Chromosome"/>
</dbReference>
<dbReference type="GO" id="GO:0005829">
    <property type="term" value="C:cytosol"/>
    <property type="evidence" value="ECO:0007669"/>
    <property type="project" value="TreeGrafter"/>
</dbReference>
<dbReference type="GO" id="GO:0005524">
    <property type="term" value="F:ATP binding"/>
    <property type="evidence" value="ECO:0007669"/>
    <property type="project" value="UniProtKB-KW"/>
</dbReference>
<dbReference type="GO" id="GO:0004592">
    <property type="term" value="F:pantoate-beta-alanine ligase activity"/>
    <property type="evidence" value="ECO:0007669"/>
    <property type="project" value="UniProtKB-UniRule"/>
</dbReference>
<dbReference type="GO" id="GO:0015940">
    <property type="term" value="P:pantothenate biosynthetic process"/>
    <property type="evidence" value="ECO:0007669"/>
    <property type="project" value="UniProtKB-UniRule"/>
</dbReference>
<dbReference type="CDD" id="cd00560">
    <property type="entry name" value="PanC"/>
    <property type="match status" value="1"/>
</dbReference>
<dbReference type="FunFam" id="3.40.50.620:FF:000114">
    <property type="entry name" value="Pantothenate synthetase"/>
    <property type="match status" value="1"/>
</dbReference>
<dbReference type="Gene3D" id="3.40.50.620">
    <property type="entry name" value="HUPs"/>
    <property type="match status" value="1"/>
</dbReference>
<dbReference type="Gene3D" id="3.30.1300.10">
    <property type="entry name" value="Pantoate-beta-alanine ligase, C-terminal domain"/>
    <property type="match status" value="1"/>
</dbReference>
<dbReference type="HAMAP" id="MF_00158">
    <property type="entry name" value="PanC"/>
    <property type="match status" value="1"/>
</dbReference>
<dbReference type="InterPro" id="IPR004821">
    <property type="entry name" value="Cyt_trans-like"/>
</dbReference>
<dbReference type="InterPro" id="IPR003721">
    <property type="entry name" value="Pantoate_ligase"/>
</dbReference>
<dbReference type="InterPro" id="IPR042176">
    <property type="entry name" value="Pantoate_ligase_C"/>
</dbReference>
<dbReference type="InterPro" id="IPR014729">
    <property type="entry name" value="Rossmann-like_a/b/a_fold"/>
</dbReference>
<dbReference type="NCBIfam" id="TIGR00125">
    <property type="entry name" value="cyt_tran_rel"/>
    <property type="match status" value="1"/>
</dbReference>
<dbReference type="NCBIfam" id="TIGR00018">
    <property type="entry name" value="panC"/>
    <property type="match status" value="1"/>
</dbReference>
<dbReference type="PANTHER" id="PTHR21299">
    <property type="entry name" value="CYTIDYLATE KINASE/PANTOATE-BETA-ALANINE LIGASE"/>
    <property type="match status" value="1"/>
</dbReference>
<dbReference type="PANTHER" id="PTHR21299:SF1">
    <property type="entry name" value="PANTOATE--BETA-ALANINE LIGASE"/>
    <property type="match status" value="1"/>
</dbReference>
<dbReference type="Pfam" id="PF02569">
    <property type="entry name" value="Pantoate_ligase"/>
    <property type="match status" value="1"/>
</dbReference>
<dbReference type="SUPFAM" id="SSF52374">
    <property type="entry name" value="Nucleotidylyl transferase"/>
    <property type="match status" value="1"/>
</dbReference>
<accession>Q72HS0</accession>
<keyword id="KW-0067">ATP-binding</keyword>
<keyword id="KW-0963">Cytoplasm</keyword>
<keyword id="KW-0436">Ligase</keyword>
<keyword id="KW-0547">Nucleotide-binding</keyword>
<keyword id="KW-0566">Pantothenate biosynthesis</keyword>
<proteinExistence type="inferred from homology"/>
<reference key="1">
    <citation type="journal article" date="2004" name="Nat. Biotechnol.">
        <title>The genome sequence of the extreme thermophile Thermus thermophilus.</title>
        <authorList>
            <person name="Henne A."/>
            <person name="Brueggemann H."/>
            <person name="Raasch C."/>
            <person name="Wiezer A."/>
            <person name="Hartsch T."/>
            <person name="Liesegang H."/>
            <person name="Johann A."/>
            <person name="Lienard T."/>
            <person name="Gohl O."/>
            <person name="Martinez-Arias R."/>
            <person name="Jacobi C."/>
            <person name="Starkuviene V."/>
            <person name="Schlenczeck S."/>
            <person name="Dencker S."/>
            <person name="Huber R."/>
            <person name="Klenk H.-P."/>
            <person name="Kramer W."/>
            <person name="Merkl R."/>
            <person name="Gottschalk G."/>
            <person name="Fritz H.-J."/>
        </authorList>
    </citation>
    <scope>NUCLEOTIDE SEQUENCE [LARGE SCALE GENOMIC DNA]</scope>
    <source>
        <strain>ATCC BAA-163 / DSM 7039 / HB27</strain>
    </source>
</reference>
<comment type="function">
    <text evidence="1">Catalyzes the condensation of pantoate with beta-alanine in an ATP-dependent reaction via a pantoyl-adenylate intermediate.</text>
</comment>
<comment type="catalytic activity">
    <reaction evidence="1">
        <text>(R)-pantoate + beta-alanine + ATP = (R)-pantothenate + AMP + diphosphate + H(+)</text>
        <dbReference type="Rhea" id="RHEA:10912"/>
        <dbReference type="ChEBI" id="CHEBI:15378"/>
        <dbReference type="ChEBI" id="CHEBI:15980"/>
        <dbReference type="ChEBI" id="CHEBI:29032"/>
        <dbReference type="ChEBI" id="CHEBI:30616"/>
        <dbReference type="ChEBI" id="CHEBI:33019"/>
        <dbReference type="ChEBI" id="CHEBI:57966"/>
        <dbReference type="ChEBI" id="CHEBI:456215"/>
        <dbReference type="EC" id="6.3.2.1"/>
    </reaction>
</comment>
<comment type="pathway">
    <text evidence="1">Cofactor biosynthesis; (R)-pantothenate biosynthesis; (R)-pantothenate from (R)-pantoate and beta-alanine: step 1/1.</text>
</comment>
<comment type="subunit">
    <text evidence="1">Homodimer.</text>
</comment>
<comment type="subcellular location">
    <subcellularLocation>
        <location evidence="1">Cytoplasm</location>
    </subcellularLocation>
</comment>
<comment type="miscellaneous">
    <text evidence="1">The reaction proceeds by a bi uni uni bi ping pong mechanism.</text>
</comment>
<comment type="similarity">
    <text evidence="1">Belongs to the pantothenate synthetase family.</text>
</comment>
<protein>
    <recommendedName>
        <fullName evidence="1">Pantothenate synthetase</fullName>
        <shortName evidence="1">PS</shortName>
        <ecNumber evidence="1">6.3.2.1</ecNumber>
    </recommendedName>
    <alternativeName>
        <fullName evidence="1">Pantoate--beta-alanine ligase</fullName>
    </alternativeName>
    <alternativeName>
        <fullName evidence="1">Pantoate-activating enzyme</fullName>
    </alternativeName>
</protein>
<gene>
    <name evidence="1" type="primary">panC</name>
    <name type="ordered locus">TT_C1416</name>
</gene>
<evidence type="ECO:0000255" key="1">
    <source>
        <dbReference type="HAMAP-Rule" id="MF_00158"/>
    </source>
</evidence>